<protein>
    <recommendedName>
        <fullName>Indole-3-acetic acid-amido synthetase GH3.5</fullName>
        <ecNumber>6.3.2.-</ecNumber>
    </recommendedName>
    <alternativeName>
        <fullName>Auxin-responsive GH3-like protein 5</fullName>
        <shortName>AtGH3-5</shortName>
    </alternativeName>
</protein>
<keyword id="KW-0002">3D-structure</keyword>
<keyword id="KW-0436">Ligase</keyword>
<keyword id="KW-1185">Reference proteome</keyword>
<evidence type="ECO:0000269" key="1">
    <source>
    </source>
</evidence>
<evidence type="ECO:0000305" key="2"/>
<evidence type="ECO:0007829" key="3">
    <source>
        <dbReference type="PDB" id="5KOD"/>
    </source>
</evidence>
<organism>
    <name type="scientific">Arabidopsis thaliana</name>
    <name type="common">Mouse-ear cress</name>
    <dbReference type="NCBI Taxonomy" id="3702"/>
    <lineage>
        <taxon>Eukaryota</taxon>
        <taxon>Viridiplantae</taxon>
        <taxon>Streptophyta</taxon>
        <taxon>Embryophyta</taxon>
        <taxon>Tracheophyta</taxon>
        <taxon>Spermatophyta</taxon>
        <taxon>Magnoliopsida</taxon>
        <taxon>eudicotyledons</taxon>
        <taxon>Gunneridae</taxon>
        <taxon>Pentapetalae</taxon>
        <taxon>rosids</taxon>
        <taxon>malvids</taxon>
        <taxon>Brassicales</taxon>
        <taxon>Brassicaceae</taxon>
        <taxon>Camelineae</taxon>
        <taxon>Arabidopsis</taxon>
    </lineage>
</organism>
<accession>O81829</accession>
<reference key="1">
    <citation type="journal article" date="1999" name="Nature">
        <title>Sequence and analysis of chromosome 4 of the plant Arabidopsis thaliana.</title>
        <authorList>
            <person name="Mayer K.F.X."/>
            <person name="Schueller C."/>
            <person name="Wambutt R."/>
            <person name="Murphy G."/>
            <person name="Volckaert G."/>
            <person name="Pohl T."/>
            <person name="Duesterhoeft A."/>
            <person name="Stiekema W."/>
            <person name="Entian K.-D."/>
            <person name="Terryn N."/>
            <person name="Harris B."/>
            <person name="Ansorge W."/>
            <person name="Brandt P."/>
            <person name="Grivell L.A."/>
            <person name="Rieger M."/>
            <person name="Weichselgartner M."/>
            <person name="de Simone V."/>
            <person name="Obermaier B."/>
            <person name="Mache R."/>
            <person name="Mueller M."/>
            <person name="Kreis M."/>
            <person name="Delseny M."/>
            <person name="Puigdomenech P."/>
            <person name="Watson M."/>
            <person name="Schmidtheini T."/>
            <person name="Reichert B."/>
            <person name="Portetelle D."/>
            <person name="Perez-Alonso M."/>
            <person name="Boutry M."/>
            <person name="Bancroft I."/>
            <person name="Vos P."/>
            <person name="Hoheisel J."/>
            <person name="Zimmermann W."/>
            <person name="Wedler H."/>
            <person name="Ridley P."/>
            <person name="Langham S.-A."/>
            <person name="McCullagh B."/>
            <person name="Bilham L."/>
            <person name="Robben J."/>
            <person name="van der Schueren J."/>
            <person name="Grymonprez B."/>
            <person name="Chuang Y.-J."/>
            <person name="Vandenbussche F."/>
            <person name="Braeken M."/>
            <person name="Weltjens I."/>
            <person name="Voet M."/>
            <person name="Bastiaens I."/>
            <person name="Aert R."/>
            <person name="Defoor E."/>
            <person name="Weitzenegger T."/>
            <person name="Bothe G."/>
            <person name="Ramsperger U."/>
            <person name="Hilbert H."/>
            <person name="Braun M."/>
            <person name="Holzer E."/>
            <person name="Brandt A."/>
            <person name="Peters S."/>
            <person name="van Staveren M."/>
            <person name="Dirkse W."/>
            <person name="Mooijman P."/>
            <person name="Klein Lankhorst R."/>
            <person name="Rose M."/>
            <person name="Hauf J."/>
            <person name="Koetter P."/>
            <person name="Berneiser S."/>
            <person name="Hempel S."/>
            <person name="Feldpausch M."/>
            <person name="Lamberth S."/>
            <person name="Van den Daele H."/>
            <person name="De Keyser A."/>
            <person name="Buysshaert C."/>
            <person name="Gielen J."/>
            <person name="Villarroel R."/>
            <person name="De Clercq R."/>
            <person name="van Montagu M."/>
            <person name="Rogers J."/>
            <person name="Cronin A."/>
            <person name="Quail M.A."/>
            <person name="Bray-Allen S."/>
            <person name="Clark L."/>
            <person name="Doggett J."/>
            <person name="Hall S."/>
            <person name="Kay M."/>
            <person name="Lennard N."/>
            <person name="McLay K."/>
            <person name="Mayes R."/>
            <person name="Pettett A."/>
            <person name="Rajandream M.A."/>
            <person name="Lyne M."/>
            <person name="Benes V."/>
            <person name="Rechmann S."/>
            <person name="Borkova D."/>
            <person name="Bloecker H."/>
            <person name="Scharfe M."/>
            <person name="Grimm M."/>
            <person name="Loehnert T.-H."/>
            <person name="Dose S."/>
            <person name="de Haan M."/>
            <person name="Maarse A.C."/>
            <person name="Schaefer M."/>
            <person name="Mueller-Auer S."/>
            <person name="Gabel C."/>
            <person name="Fuchs M."/>
            <person name="Fartmann B."/>
            <person name="Granderath K."/>
            <person name="Dauner D."/>
            <person name="Herzl A."/>
            <person name="Neumann S."/>
            <person name="Argiriou A."/>
            <person name="Vitale D."/>
            <person name="Liguori R."/>
            <person name="Piravandi E."/>
            <person name="Massenet O."/>
            <person name="Quigley F."/>
            <person name="Clabauld G."/>
            <person name="Muendlein A."/>
            <person name="Felber R."/>
            <person name="Schnabl S."/>
            <person name="Hiller R."/>
            <person name="Schmidt W."/>
            <person name="Lecharny A."/>
            <person name="Aubourg S."/>
            <person name="Chefdor F."/>
            <person name="Cooke R."/>
            <person name="Berger C."/>
            <person name="Monfort A."/>
            <person name="Casacuberta E."/>
            <person name="Gibbons T."/>
            <person name="Weber N."/>
            <person name="Vandenbol M."/>
            <person name="Bargues M."/>
            <person name="Terol J."/>
            <person name="Torres A."/>
            <person name="Perez-Perez A."/>
            <person name="Purnelle B."/>
            <person name="Bent E."/>
            <person name="Johnson S."/>
            <person name="Tacon D."/>
            <person name="Jesse T."/>
            <person name="Heijnen L."/>
            <person name="Schwarz S."/>
            <person name="Scholler P."/>
            <person name="Heber S."/>
            <person name="Francs P."/>
            <person name="Bielke C."/>
            <person name="Frishman D."/>
            <person name="Haase D."/>
            <person name="Lemcke K."/>
            <person name="Mewes H.-W."/>
            <person name="Stocker S."/>
            <person name="Zaccaria P."/>
            <person name="Bevan M."/>
            <person name="Wilson R.K."/>
            <person name="de la Bastide M."/>
            <person name="Habermann K."/>
            <person name="Parnell L."/>
            <person name="Dedhia N."/>
            <person name="Gnoj L."/>
            <person name="Schutz K."/>
            <person name="Huang E."/>
            <person name="Spiegel L."/>
            <person name="Sekhon M."/>
            <person name="Murray J."/>
            <person name="Sheet P."/>
            <person name="Cordes M."/>
            <person name="Abu-Threideh J."/>
            <person name="Stoneking T."/>
            <person name="Kalicki J."/>
            <person name="Graves T."/>
            <person name="Harmon G."/>
            <person name="Edwards J."/>
            <person name="Latreille P."/>
            <person name="Courtney L."/>
            <person name="Cloud J."/>
            <person name="Abbott A."/>
            <person name="Scott K."/>
            <person name="Johnson D."/>
            <person name="Minx P."/>
            <person name="Bentley D."/>
            <person name="Fulton B."/>
            <person name="Miller N."/>
            <person name="Greco T."/>
            <person name="Kemp K."/>
            <person name="Kramer J."/>
            <person name="Fulton L."/>
            <person name="Mardis E."/>
            <person name="Dante M."/>
            <person name="Pepin K."/>
            <person name="Hillier L.W."/>
            <person name="Nelson J."/>
            <person name="Spieth J."/>
            <person name="Ryan E."/>
            <person name="Andrews S."/>
            <person name="Geisel C."/>
            <person name="Layman D."/>
            <person name="Du H."/>
            <person name="Ali J."/>
            <person name="Berghoff A."/>
            <person name="Jones K."/>
            <person name="Drone K."/>
            <person name="Cotton M."/>
            <person name="Joshu C."/>
            <person name="Antonoiu B."/>
            <person name="Zidanic M."/>
            <person name="Strong C."/>
            <person name="Sun H."/>
            <person name="Lamar B."/>
            <person name="Yordan C."/>
            <person name="Ma P."/>
            <person name="Zhong J."/>
            <person name="Preston R."/>
            <person name="Vil D."/>
            <person name="Shekher M."/>
            <person name="Matero A."/>
            <person name="Shah R."/>
            <person name="Swaby I.K."/>
            <person name="O'Shaughnessy A."/>
            <person name="Rodriguez M."/>
            <person name="Hoffman J."/>
            <person name="Till S."/>
            <person name="Granat S."/>
            <person name="Shohdy N."/>
            <person name="Hasegawa A."/>
            <person name="Hameed A."/>
            <person name="Lodhi M."/>
            <person name="Johnson A."/>
            <person name="Chen E."/>
            <person name="Marra M.A."/>
            <person name="Martienssen R."/>
            <person name="McCombie W.R."/>
        </authorList>
    </citation>
    <scope>NUCLEOTIDE SEQUENCE [LARGE SCALE GENOMIC DNA]</scope>
    <source>
        <strain>cv. Columbia</strain>
    </source>
</reference>
<reference key="2">
    <citation type="journal article" date="2017" name="Plant J.">
        <title>Araport11: a complete reannotation of the Arabidopsis thaliana reference genome.</title>
        <authorList>
            <person name="Cheng C.Y."/>
            <person name="Krishnakumar V."/>
            <person name="Chan A.P."/>
            <person name="Thibaud-Nissen F."/>
            <person name="Schobel S."/>
            <person name="Town C.D."/>
        </authorList>
    </citation>
    <scope>GENOME REANNOTATION</scope>
    <source>
        <strain>cv. Columbia</strain>
    </source>
</reference>
<reference key="3">
    <citation type="journal article" date="2003" name="Science">
        <title>Empirical analysis of transcriptional activity in the Arabidopsis genome.</title>
        <authorList>
            <person name="Yamada K."/>
            <person name="Lim J."/>
            <person name="Dale J.M."/>
            <person name="Chen H."/>
            <person name="Shinn P."/>
            <person name="Palm C.J."/>
            <person name="Southwick A.M."/>
            <person name="Wu H.C."/>
            <person name="Kim C.J."/>
            <person name="Nguyen M."/>
            <person name="Pham P.K."/>
            <person name="Cheuk R.F."/>
            <person name="Karlin-Newmann G."/>
            <person name="Liu S.X."/>
            <person name="Lam B."/>
            <person name="Sakano H."/>
            <person name="Wu T."/>
            <person name="Yu G."/>
            <person name="Miranda M."/>
            <person name="Quach H.L."/>
            <person name="Tripp M."/>
            <person name="Chang C.H."/>
            <person name="Lee J.M."/>
            <person name="Toriumi M.J."/>
            <person name="Chan M.M."/>
            <person name="Tang C.C."/>
            <person name="Onodera C.S."/>
            <person name="Deng J.M."/>
            <person name="Akiyama K."/>
            <person name="Ansari Y."/>
            <person name="Arakawa T."/>
            <person name="Banh J."/>
            <person name="Banno F."/>
            <person name="Bowser L."/>
            <person name="Brooks S.Y."/>
            <person name="Carninci P."/>
            <person name="Chao Q."/>
            <person name="Choy N."/>
            <person name="Enju A."/>
            <person name="Goldsmith A.D."/>
            <person name="Gurjal M."/>
            <person name="Hansen N.F."/>
            <person name="Hayashizaki Y."/>
            <person name="Johnson-Hopson C."/>
            <person name="Hsuan V.W."/>
            <person name="Iida K."/>
            <person name="Karnes M."/>
            <person name="Khan S."/>
            <person name="Koesema E."/>
            <person name="Ishida J."/>
            <person name="Jiang P.X."/>
            <person name="Jones T."/>
            <person name="Kawai J."/>
            <person name="Kamiya A."/>
            <person name="Meyers C."/>
            <person name="Nakajima M."/>
            <person name="Narusaka M."/>
            <person name="Seki M."/>
            <person name="Sakurai T."/>
            <person name="Satou M."/>
            <person name="Tamse R."/>
            <person name="Vaysberg M."/>
            <person name="Wallender E.K."/>
            <person name="Wong C."/>
            <person name="Yamamura Y."/>
            <person name="Yuan S."/>
            <person name="Shinozaki K."/>
            <person name="Davis R.W."/>
            <person name="Theologis A."/>
            <person name="Ecker J.R."/>
        </authorList>
    </citation>
    <scope>NUCLEOTIDE SEQUENCE [LARGE SCALE MRNA]</scope>
    <source>
        <strain>cv. Columbia</strain>
    </source>
</reference>
<reference key="4">
    <citation type="journal article" date="2005" name="Plant Cell">
        <title>Characterization of an Arabidopsis enzyme family that conjugates amino acids to indole-3-acetic acid.</title>
        <authorList>
            <person name="Staswick P.E."/>
            <person name="Serban B."/>
            <person name="Rowe M."/>
            <person name="Tiryaki I."/>
            <person name="Maldonado M.T."/>
            <person name="Maldonado M.C."/>
            <person name="Suza W."/>
        </authorList>
    </citation>
    <scope>FUNCTION</scope>
    <scope>CHARACTERIZATION</scope>
    <scope>INDUCTION</scope>
</reference>
<reference key="5">
    <citation type="journal article" date="2002" name="Plant Mol. Biol.">
        <title>Auxin-responsive gene expression: genes, promoters and regulatory factors.</title>
        <authorList>
            <person name="Hagen G."/>
            <person name="Guilfoyle T.J."/>
        </authorList>
    </citation>
    <scope>NOMENCLATURE</scope>
</reference>
<feature type="chain" id="PRO_0000203574" description="Indole-3-acetic acid-amido synthetase GH3.5">
    <location>
        <begin position="1"/>
        <end position="612"/>
    </location>
</feature>
<feature type="helix" evidence="3">
    <location>
        <begin position="19"/>
        <end position="33"/>
    </location>
</feature>
<feature type="helix" evidence="3">
    <location>
        <begin position="35"/>
        <end position="49"/>
    </location>
</feature>
<feature type="helix" evidence="3">
    <location>
        <begin position="54"/>
        <end position="58"/>
    </location>
</feature>
<feature type="helix" evidence="3">
    <location>
        <begin position="67"/>
        <end position="73"/>
    </location>
</feature>
<feature type="helix" evidence="3">
    <location>
        <begin position="79"/>
        <end position="90"/>
    </location>
</feature>
<feature type="strand" evidence="3">
    <location>
        <begin position="105"/>
        <end position="113"/>
    </location>
</feature>
<feature type="strand" evidence="3">
    <location>
        <begin position="116"/>
        <end position="122"/>
    </location>
</feature>
<feature type="helix" evidence="3">
    <location>
        <begin position="126"/>
        <end position="141"/>
    </location>
</feature>
<feature type="turn" evidence="3">
    <location>
        <begin position="142"/>
        <end position="144"/>
    </location>
</feature>
<feature type="helix" evidence="3">
    <location>
        <begin position="148"/>
        <end position="150"/>
    </location>
</feature>
<feature type="strand" evidence="3">
    <location>
        <begin position="151"/>
        <end position="155"/>
    </location>
</feature>
<feature type="strand" evidence="3">
    <location>
        <begin position="170"/>
        <end position="172"/>
    </location>
</feature>
<feature type="helix" evidence="3">
    <location>
        <begin position="174"/>
        <end position="179"/>
    </location>
</feature>
<feature type="helix" evidence="3">
    <location>
        <begin position="182"/>
        <end position="185"/>
    </location>
</feature>
<feature type="helix" evidence="3">
    <location>
        <begin position="191"/>
        <end position="193"/>
    </location>
</feature>
<feature type="strand" evidence="3">
    <location>
        <begin position="195"/>
        <end position="197"/>
    </location>
</feature>
<feature type="helix" evidence="3">
    <location>
        <begin position="199"/>
        <end position="202"/>
    </location>
</feature>
<feature type="helix" evidence="3">
    <location>
        <begin position="207"/>
        <end position="220"/>
    </location>
</feature>
<feature type="helix" evidence="3">
    <location>
        <begin position="222"/>
        <end position="224"/>
    </location>
</feature>
<feature type="strand" evidence="3">
    <location>
        <begin position="225"/>
        <end position="232"/>
    </location>
</feature>
<feature type="helix" evidence="3">
    <location>
        <begin position="233"/>
        <end position="256"/>
    </location>
</feature>
<feature type="helix" evidence="3">
    <location>
        <begin position="267"/>
        <end position="273"/>
    </location>
</feature>
<feature type="helix" evidence="3">
    <location>
        <begin position="280"/>
        <end position="290"/>
    </location>
</feature>
<feature type="helix" evidence="3">
    <location>
        <begin position="298"/>
        <end position="302"/>
    </location>
</feature>
<feature type="strand" evidence="3">
    <location>
        <begin position="309"/>
        <end position="312"/>
    </location>
</feature>
<feature type="helix" evidence="3">
    <location>
        <begin position="315"/>
        <end position="320"/>
    </location>
</feature>
<feature type="helix" evidence="3">
    <location>
        <begin position="321"/>
        <end position="328"/>
    </location>
</feature>
<feature type="strand" evidence="3">
    <location>
        <begin position="337"/>
        <end position="339"/>
    </location>
</feature>
<feature type="strand" evidence="3">
    <location>
        <begin position="344"/>
        <end position="347"/>
    </location>
</feature>
<feature type="helix" evidence="3">
    <location>
        <begin position="355"/>
        <end position="357"/>
    </location>
</feature>
<feature type="strand" evidence="3">
    <location>
        <begin position="360"/>
        <end position="362"/>
    </location>
</feature>
<feature type="strand" evidence="3">
    <location>
        <begin position="366"/>
        <end position="373"/>
    </location>
</feature>
<feature type="helix" evidence="3">
    <location>
        <begin position="401"/>
        <end position="403"/>
    </location>
</feature>
<feature type="strand" evidence="3">
    <location>
        <begin position="409"/>
        <end position="415"/>
    </location>
</feature>
<feature type="strand" evidence="3">
    <location>
        <begin position="422"/>
        <end position="435"/>
    </location>
</feature>
<feature type="strand" evidence="3">
    <location>
        <begin position="438"/>
        <end position="446"/>
    </location>
</feature>
<feature type="strand" evidence="3">
    <location>
        <begin position="453"/>
        <end position="455"/>
    </location>
</feature>
<feature type="helix" evidence="3">
    <location>
        <begin position="460"/>
        <end position="471"/>
    </location>
</feature>
<feature type="helix" evidence="3">
    <location>
        <begin position="472"/>
        <end position="477"/>
    </location>
</feature>
<feature type="strand" evidence="3">
    <location>
        <begin position="479"/>
        <end position="489"/>
    </location>
</feature>
<feature type="strand" evidence="3">
    <location>
        <begin position="491"/>
        <end position="494"/>
    </location>
</feature>
<feature type="strand" evidence="3">
    <location>
        <begin position="496"/>
        <end position="505"/>
    </location>
</feature>
<feature type="strand" evidence="3">
    <location>
        <begin position="507"/>
        <end position="509"/>
    </location>
</feature>
<feature type="helix" evidence="3">
    <location>
        <begin position="513"/>
        <end position="526"/>
    </location>
</feature>
<feature type="helix" evidence="3">
    <location>
        <begin position="529"/>
        <end position="536"/>
    </location>
</feature>
<feature type="strand" evidence="3">
    <location>
        <begin position="545"/>
        <end position="549"/>
    </location>
</feature>
<feature type="helix" evidence="3">
    <location>
        <begin position="553"/>
        <end position="563"/>
    </location>
</feature>
<feature type="helix" evidence="3">
    <location>
        <begin position="580"/>
        <end position="587"/>
    </location>
</feature>
<feature type="strand" evidence="3">
    <location>
        <begin position="590"/>
        <end position="595"/>
    </location>
</feature>
<comment type="function">
    <text evidence="1">Catalyzes the synthesis of indole-3-acetic acid (IAA)-amino acid conjugates, providing a mechanism for the plant to cope with the presence of excess auxin. Strongly reactive with Glu, Gln, Trp, Asp, Ala, Leu, Phe, Gly, Tyr, Met, Ile and Val. Little or no product formation with His, Ser, Thr, Arg, Lys, or Cys. Also active on pyruvic and butyric acid analogs of IAA, PAA and the synthetic auxin naphthaleneacetic acid (NAA). The two chlorinated synthetic auxin herbicides 2,4-D and 3,6-dichloro-o-anisic acid (dicamba) cannot be used as substrates.</text>
</comment>
<comment type="induction">
    <text evidence="1">By auxin.</text>
</comment>
<comment type="similarity">
    <text evidence="2">Belongs to the IAA-amido conjugating enzyme family.</text>
</comment>
<name>GH35_ARATH</name>
<dbReference type="EC" id="6.3.2.-"/>
<dbReference type="EMBL" id="AL030978">
    <property type="protein sequence ID" value="CAA19720.1"/>
    <property type="molecule type" value="Genomic_DNA"/>
</dbReference>
<dbReference type="EMBL" id="AL161566">
    <property type="protein sequence ID" value="CAB79581.1"/>
    <property type="molecule type" value="Genomic_DNA"/>
</dbReference>
<dbReference type="EMBL" id="CP002687">
    <property type="protein sequence ID" value="AEE85318.1"/>
    <property type="molecule type" value="Genomic_DNA"/>
</dbReference>
<dbReference type="EMBL" id="AY070038">
    <property type="protein sequence ID" value="AAL49795.1"/>
    <property type="molecule type" value="mRNA"/>
</dbReference>
<dbReference type="EMBL" id="AY096516">
    <property type="protein sequence ID" value="AAM20166.1"/>
    <property type="molecule type" value="mRNA"/>
</dbReference>
<dbReference type="PIR" id="T05750">
    <property type="entry name" value="T05750"/>
</dbReference>
<dbReference type="RefSeq" id="NP_194456.1">
    <property type="nucleotide sequence ID" value="NM_118860.5"/>
</dbReference>
<dbReference type="PDB" id="5KOD">
    <property type="method" value="X-ray"/>
    <property type="resolution" value="2.20 A"/>
    <property type="chains" value="A/B/C/D=1-612"/>
</dbReference>
<dbReference type="PDBsum" id="5KOD"/>
<dbReference type="SMR" id="O81829"/>
<dbReference type="BioGRID" id="14121">
    <property type="interactions" value="1"/>
</dbReference>
<dbReference type="FunCoup" id="O81829">
    <property type="interactions" value="1409"/>
</dbReference>
<dbReference type="STRING" id="3702.O81829"/>
<dbReference type="PaxDb" id="3702-AT4G27260.1"/>
<dbReference type="ProteomicsDB" id="220751"/>
<dbReference type="EnsemblPlants" id="AT4G27260.1">
    <property type="protein sequence ID" value="AT4G27260.1"/>
    <property type="gene ID" value="AT4G27260"/>
</dbReference>
<dbReference type="GeneID" id="828834"/>
<dbReference type="Gramene" id="AT4G27260.1">
    <property type="protein sequence ID" value="AT4G27260.1"/>
    <property type="gene ID" value="AT4G27260"/>
</dbReference>
<dbReference type="KEGG" id="ath:AT4G27260"/>
<dbReference type="Araport" id="AT4G27260"/>
<dbReference type="TAIR" id="AT4G27260">
    <property type="gene designation" value="WES1"/>
</dbReference>
<dbReference type="eggNOG" id="ENOG502QQAN">
    <property type="taxonomic scope" value="Eukaryota"/>
</dbReference>
<dbReference type="HOGENOM" id="CLU_016249_2_1_1"/>
<dbReference type="InParanoid" id="O81829"/>
<dbReference type="OMA" id="QRNECTE"/>
<dbReference type="PhylomeDB" id="O81829"/>
<dbReference type="BioCyc" id="ARA:AT4G27260-MONOMER"/>
<dbReference type="BioCyc" id="MetaCyc:AT4G27260-MONOMER"/>
<dbReference type="SABIO-RK" id="O81829"/>
<dbReference type="PRO" id="PR:O81829"/>
<dbReference type="Proteomes" id="UP000006548">
    <property type="component" value="Chromosome 4"/>
</dbReference>
<dbReference type="ExpressionAtlas" id="O81829">
    <property type="expression patterns" value="baseline and differential"/>
</dbReference>
<dbReference type="GO" id="GO:0010279">
    <property type="term" value="F:indole-3-acetic acid amido synthetase activity"/>
    <property type="evidence" value="ECO:0000314"/>
    <property type="project" value="TAIR"/>
</dbReference>
<dbReference type="GO" id="GO:0010120">
    <property type="term" value="P:camalexin biosynthetic process"/>
    <property type="evidence" value="ECO:0000315"/>
    <property type="project" value="TAIR"/>
</dbReference>
<dbReference type="GO" id="GO:1901183">
    <property type="term" value="P:positive regulation of camalexin biosynthetic process"/>
    <property type="evidence" value="ECO:0000315"/>
    <property type="project" value="TAIR"/>
</dbReference>
<dbReference type="GO" id="GO:0009733">
    <property type="term" value="P:response to auxin"/>
    <property type="evidence" value="ECO:0000315"/>
    <property type="project" value="TAIR"/>
</dbReference>
<dbReference type="InterPro" id="IPR004993">
    <property type="entry name" value="GH3"/>
</dbReference>
<dbReference type="InterPro" id="IPR055378">
    <property type="entry name" value="GH3_C"/>
</dbReference>
<dbReference type="InterPro" id="IPR055377">
    <property type="entry name" value="GH3_M"/>
</dbReference>
<dbReference type="PANTHER" id="PTHR31901">
    <property type="entry name" value="GH3 DOMAIN-CONTAINING PROTEIN"/>
    <property type="match status" value="1"/>
</dbReference>
<dbReference type="PANTHER" id="PTHR31901:SF45">
    <property type="entry name" value="INDOLE-3-ACETIC ACID-AMIDO SYNTHETASE GH3.5"/>
    <property type="match status" value="1"/>
</dbReference>
<dbReference type="Pfam" id="PF03321">
    <property type="entry name" value="GH3"/>
    <property type="match status" value="1"/>
</dbReference>
<dbReference type="Pfam" id="PF23572">
    <property type="entry name" value="GH3_C"/>
    <property type="match status" value="1"/>
</dbReference>
<dbReference type="Pfam" id="PF23571">
    <property type="entry name" value="GH3_M"/>
    <property type="match status" value="1"/>
</dbReference>
<proteinExistence type="evidence at protein level"/>
<gene>
    <name type="primary">GH3.5</name>
    <name type="ordered locus">At4g27260</name>
    <name type="ORF">M4I22.70</name>
</gene>
<sequence>MPEAPKKESLEVFDLTLDQKNKQKLQLIEELTSNADQVQRQVLEEILTRNADVEYLRRHDLNGRTDRETFKNIMPVITYEDIEPEINRIANGDKSPILSSKPISEFLTSSGTSGGERKLMPTIEEELDRRSLLYSLLMPVMSQFVPGLENGKGMYFLFIKSESKTPGGLPARPVLTSYYKSSHFKERPYDPYTNYTSPNETILCSDSYQSMYSQMLCGLCQHQEVLRVGAVFASGFIRAIKFLEKHWIELVRDIRTGTLSSLITDPSVREAVAKILKPSPKLADFVEFECKKSSWQGIITRLWPNTKYVDVIVTGTMSQYIPTLDYYSNGLPLVCTMYASSECYFGVNLRPLCKPSEVSYTLIPSMAYFEFLPVHRNNGVTNSINLPKALTEKEQQELVDLVDVKLGQEYELVVTTYAGLCRYRVGDLLRVTGFKNKAPQFSFICRKNVVLSIDSDKTDEVELQNAVKNAVTHLVPFDASLSEYTSYADTSSIPGHYVLFWELCLDGNTPIPPSVFEDCCLAVEESFNTVYRQGRVSDKSIGPLEIKIVEPGTFDKLMDYAISLGASINQYKTPRCVKFAPIIELLNSRVVDSYFSPKCPKWVPGHKQWGSN</sequence>